<proteinExistence type="evidence at protein level"/>
<comment type="function">
    <text evidence="10 11">Binds IGF1 and IGF2 with a relatively low affinity. Stimulates prostacyclin (PGI2) production. Stimulates cell adhesion. Acts as a ligand for CD93 to play a role in angiogenesis (PubMed:38218180).</text>
</comment>
<comment type="subunit">
    <text evidence="8">May interact with VPS24/CHMP3; the relevance of such interaction however remains unclear. Interacts with CD93; this interaction plays a role in endothelial cells angiogenesis (PubMed:38218180).</text>
</comment>
<comment type="subcellular location">
    <subcellularLocation>
        <location>Secreted</location>
    </subcellularLocation>
</comment>
<comment type="alternative products">
    <event type="alternative splicing"/>
    <isoform>
        <id>Q16270-1</id>
        <name>1</name>
        <sequence type="displayed"/>
    </isoform>
    <isoform>
        <id>Q16270-2</id>
        <name>2</name>
        <sequence type="described" ref="VSP_045297"/>
    </isoform>
</comment>
<comment type="PTM">
    <text evidence="11">N-glycosylated.</text>
</comment>
<comment type="RNA editing">
    <location>
        <position position="78" evidence="5"/>
    </location>
    <location>
        <position position="95" evidence="5 9"/>
    </location>
    <text>Partially edited. In the brain, position 78 is edited at about 55% and position 95 at about 31%.</text>
</comment>
<comment type="disease" evidence="6">
    <disease id="DI-03265">
        <name>Retinal arterial macroaneurysm with supravalvular pulmonic stenosis</name>
        <acronym>RAMSVPS</acronym>
        <description>An autosomal recessive condition characterized by the bilateral appearance of 'beading' along the major retinal arterial trunks, with the subsequent formation of macroaneurysms. Affected individuals also have supravalvular pulmonic stenosis, often requiring surgical correction.</description>
        <dbReference type="MIM" id="614224"/>
    </disease>
    <text>The disease is caused by variants affecting the gene represented in this entry.</text>
</comment>
<keyword id="KW-0002">3D-structure</keyword>
<keyword id="KW-0025">Alternative splicing</keyword>
<keyword id="KW-0130">Cell adhesion</keyword>
<keyword id="KW-0903">Direct protein sequencing</keyword>
<keyword id="KW-1015">Disulfide bond</keyword>
<keyword id="KW-0325">Glycoprotein</keyword>
<keyword id="KW-0340">Growth factor binding</keyword>
<keyword id="KW-0393">Immunoglobulin domain</keyword>
<keyword id="KW-0597">Phosphoprotein</keyword>
<keyword id="KW-1267">Proteomics identification</keyword>
<keyword id="KW-1185">Reference proteome</keyword>
<keyword id="KW-0691">RNA editing</keyword>
<keyword id="KW-0964">Secreted</keyword>
<keyword id="KW-0732">Signal</keyword>
<evidence type="ECO:0000255" key="1">
    <source>
        <dbReference type="PROSITE-ProRule" id="PRU00114"/>
    </source>
</evidence>
<evidence type="ECO:0000255" key="2">
    <source>
        <dbReference type="PROSITE-ProRule" id="PRU00653"/>
    </source>
</evidence>
<evidence type="ECO:0000255" key="3">
    <source>
        <dbReference type="PROSITE-ProRule" id="PRU00798"/>
    </source>
</evidence>
<evidence type="ECO:0000269" key="4">
    <source>
    </source>
</evidence>
<evidence type="ECO:0000269" key="5">
    <source>
    </source>
</evidence>
<evidence type="ECO:0000269" key="6">
    <source>
    </source>
</evidence>
<evidence type="ECO:0000269" key="7">
    <source>
    </source>
</evidence>
<evidence type="ECO:0000269" key="8">
    <source>
    </source>
</evidence>
<evidence type="ECO:0000269" key="9">
    <source>
    </source>
</evidence>
<evidence type="ECO:0000269" key="10">
    <source>
    </source>
</evidence>
<evidence type="ECO:0000269" key="11">
    <source>
    </source>
</evidence>
<evidence type="ECO:0000269" key="12">
    <source ref="4"/>
</evidence>
<evidence type="ECO:0000303" key="13">
    <source>
    </source>
</evidence>
<evidence type="ECO:0000305" key="14"/>
<evidence type="ECO:0000305" key="15">
    <source>
    </source>
</evidence>
<evidence type="ECO:0007744" key="16">
    <source>
        <dbReference type="PDB" id="8IVD"/>
    </source>
</evidence>
<evidence type="ECO:0007829" key="17">
    <source>
        <dbReference type="PDB" id="8IVD"/>
    </source>
</evidence>
<reference key="1">
    <citation type="journal article" date="1993" name="Cell Growth Differ.">
        <title>Identification and characterization of genes differentially expressed in meningiomas.</title>
        <authorList>
            <person name="Murphy M."/>
            <person name="Pykett M.J."/>
            <person name="Harnish P."/>
            <person name="Zang K.D."/>
            <person name="George D.L."/>
        </authorList>
    </citation>
    <scope>NUCLEOTIDE SEQUENCE [MRNA] (ISOFORM 1)</scope>
    <scope>VARIANT PHE-11</scope>
    <scope>RNA EDITING OF POSITION 95</scope>
    <source>
        <tissue>Leptomeninges</tissue>
    </source>
</reference>
<reference key="2">
    <citation type="journal article" date="1994" name="Biochem. J.">
        <title>Purification and molecular cloning of prostacyclin-stimulating factor from serum-free conditioned medium of human diploid fibroblast cells.</title>
        <authorList>
            <person name="Yamauchi T."/>
            <person name="Umeda F."/>
            <person name="Masakado M."/>
            <person name="Isaji M."/>
            <person name="Mizushima S."/>
            <person name="Nawata H."/>
        </authorList>
    </citation>
    <scope>NUCLEOTIDE SEQUENCE [MRNA] (ISOFORM 1)</scope>
</reference>
<reference key="3">
    <citation type="submission" date="2003-05" db="EMBL/GenBank/DDBJ databases">
        <title>Cloning of human full-length CDSs in BD Creator(TM) system donor vector.</title>
        <authorList>
            <person name="Kalnine N."/>
            <person name="Chen X."/>
            <person name="Rolfs A."/>
            <person name="Halleck A."/>
            <person name="Hines L."/>
            <person name="Eisenstein S."/>
            <person name="Koundinya M."/>
            <person name="Raphael J."/>
            <person name="Moreira D."/>
            <person name="Kelley T."/>
            <person name="LaBaer J."/>
            <person name="Lin Y."/>
            <person name="Phelan M."/>
            <person name="Farmer A."/>
        </authorList>
    </citation>
    <scope>NUCLEOTIDE SEQUENCE [LARGE SCALE MRNA] (ISOFORM 1)</scope>
</reference>
<reference key="4">
    <citation type="submission" date="2004-01" db="EMBL/GenBank/DDBJ databases">
        <authorList>
            <consortium name="NIEHS SNPs program"/>
        </authorList>
    </citation>
    <scope>NUCLEOTIDE SEQUENCE [GENOMIC DNA]</scope>
    <scope>VARIANT PHE-11</scope>
</reference>
<reference key="5">
    <citation type="journal article" date="2004" name="Nat. Genet.">
        <title>Complete sequencing and characterization of 21,243 full-length human cDNAs.</title>
        <authorList>
            <person name="Ota T."/>
            <person name="Suzuki Y."/>
            <person name="Nishikawa T."/>
            <person name="Otsuki T."/>
            <person name="Sugiyama T."/>
            <person name="Irie R."/>
            <person name="Wakamatsu A."/>
            <person name="Hayashi K."/>
            <person name="Sato H."/>
            <person name="Nagai K."/>
            <person name="Kimura K."/>
            <person name="Makita H."/>
            <person name="Sekine M."/>
            <person name="Obayashi M."/>
            <person name="Nishi T."/>
            <person name="Shibahara T."/>
            <person name="Tanaka T."/>
            <person name="Ishii S."/>
            <person name="Yamamoto J."/>
            <person name="Saito K."/>
            <person name="Kawai Y."/>
            <person name="Isono Y."/>
            <person name="Nakamura Y."/>
            <person name="Nagahari K."/>
            <person name="Murakami K."/>
            <person name="Yasuda T."/>
            <person name="Iwayanagi T."/>
            <person name="Wagatsuma M."/>
            <person name="Shiratori A."/>
            <person name="Sudo H."/>
            <person name="Hosoiri T."/>
            <person name="Kaku Y."/>
            <person name="Kodaira H."/>
            <person name="Kondo H."/>
            <person name="Sugawara M."/>
            <person name="Takahashi M."/>
            <person name="Kanda K."/>
            <person name="Yokoi T."/>
            <person name="Furuya T."/>
            <person name="Kikkawa E."/>
            <person name="Omura Y."/>
            <person name="Abe K."/>
            <person name="Kamihara K."/>
            <person name="Katsuta N."/>
            <person name="Sato K."/>
            <person name="Tanikawa M."/>
            <person name="Yamazaki M."/>
            <person name="Ninomiya K."/>
            <person name="Ishibashi T."/>
            <person name="Yamashita H."/>
            <person name="Murakawa K."/>
            <person name="Fujimori K."/>
            <person name="Tanai H."/>
            <person name="Kimata M."/>
            <person name="Watanabe M."/>
            <person name="Hiraoka S."/>
            <person name="Chiba Y."/>
            <person name="Ishida S."/>
            <person name="Ono Y."/>
            <person name="Takiguchi S."/>
            <person name="Watanabe S."/>
            <person name="Yosida M."/>
            <person name="Hotuta T."/>
            <person name="Kusano J."/>
            <person name="Kanehori K."/>
            <person name="Takahashi-Fujii A."/>
            <person name="Hara H."/>
            <person name="Tanase T.-O."/>
            <person name="Nomura Y."/>
            <person name="Togiya S."/>
            <person name="Komai F."/>
            <person name="Hara R."/>
            <person name="Takeuchi K."/>
            <person name="Arita M."/>
            <person name="Imose N."/>
            <person name="Musashino K."/>
            <person name="Yuuki H."/>
            <person name="Oshima A."/>
            <person name="Sasaki N."/>
            <person name="Aotsuka S."/>
            <person name="Yoshikawa Y."/>
            <person name="Matsunawa H."/>
            <person name="Ichihara T."/>
            <person name="Shiohata N."/>
            <person name="Sano S."/>
            <person name="Moriya S."/>
            <person name="Momiyama H."/>
            <person name="Satoh N."/>
            <person name="Takami S."/>
            <person name="Terashima Y."/>
            <person name="Suzuki O."/>
            <person name="Nakagawa S."/>
            <person name="Senoh A."/>
            <person name="Mizoguchi H."/>
            <person name="Goto Y."/>
            <person name="Shimizu F."/>
            <person name="Wakebe H."/>
            <person name="Hishigaki H."/>
            <person name="Watanabe T."/>
            <person name="Sugiyama A."/>
            <person name="Takemoto M."/>
            <person name="Kawakami B."/>
            <person name="Yamazaki M."/>
            <person name="Watanabe K."/>
            <person name="Kumagai A."/>
            <person name="Itakura S."/>
            <person name="Fukuzumi Y."/>
            <person name="Fujimori Y."/>
            <person name="Komiyama M."/>
            <person name="Tashiro H."/>
            <person name="Tanigami A."/>
            <person name="Fujiwara T."/>
            <person name="Ono T."/>
            <person name="Yamada K."/>
            <person name="Fujii Y."/>
            <person name="Ozaki K."/>
            <person name="Hirao M."/>
            <person name="Ohmori Y."/>
            <person name="Kawabata A."/>
            <person name="Hikiji T."/>
            <person name="Kobatake N."/>
            <person name="Inagaki H."/>
            <person name="Ikema Y."/>
            <person name="Okamoto S."/>
            <person name="Okitani R."/>
            <person name="Kawakami T."/>
            <person name="Noguchi S."/>
            <person name="Itoh T."/>
            <person name="Shigeta K."/>
            <person name="Senba T."/>
            <person name="Matsumura K."/>
            <person name="Nakajima Y."/>
            <person name="Mizuno T."/>
            <person name="Morinaga M."/>
            <person name="Sasaki M."/>
            <person name="Togashi T."/>
            <person name="Oyama M."/>
            <person name="Hata H."/>
            <person name="Watanabe M."/>
            <person name="Komatsu T."/>
            <person name="Mizushima-Sugano J."/>
            <person name="Satoh T."/>
            <person name="Shirai Y."/>
            <person name="Takahashi Y."/>
            <person name="Nakagawa K."/>
            <person name="Okumura K."/>
            <person name="Nagase T."/>
            <person name="Nomura N."/>
            <person name="Kikuchi H."/>
            <person name="Masuho Y."/>
            <person name="Yamashita R."/>
            <person name="Nakai K."/>
            <person name="Yada T."/>
            <person name="Nakamura Y."/>
            <person name="Ohara O."/>
            <person name="Isogai T."/>
            <person name="Sugano S."/>
        </authorList>
    </citation>
    <scope>NUCLEOTIDE SEQUENCE [LARGE SCALE MRNA] (ISOFORM 2)</scope>
    <source>
        <tissue>Thalamus</tissue>
        <tissue>Trachea</tissue>
    </source>
</reference>
<reference key="6">
    <citation type="journal article" date="2005" name="Nature">
        <title>Generation and annotation of the DNA sequences of human chromosomes 2 and 4.</title>
        <authorList>
            <person name="Hillier L.W."/>
            <person name="Graves T.A."/>
            <person name="Fulton R.S."/>
            <person name="Fulton L.A."/>
            <person name="Pepin K.H."/>
            <person name="Minx P."/>
            <person name="Wagner-McPherson C."/>
            <person name="Layman D."/>
            <person name="Wylie K."/>
            <person name="Sekhon M."/>
            <person name="Becker M.C."/>
            <person name="Fewell G.A."/>
            <person name="Delehaunty K.D."/>
            <person name="Miner T.L."/>
            <person name="Nash W.E."/>
            <person name="Kremitzki C."/>
            <person name="Oddy L."/>
            <person name="Du H."/>
            <person name="Sun H."/>
            <person name="Bradshaw-Cordum H."/>
            <person name="Ali J."/>
            <person name="Carter J."/>
            <person name="Cordes M."/>
            <person name="Harris A."/>
            <person name="Isak A."/>
            <person name="van Brunt A."/>
            <person name="Nguyen C."/>
            <person name="Du F."/>
            <person name="Courtney L."/>
            <person name="Kalicki J."/>
            <person name="Ozersky P."/>
            <person name="Abbott S."/>
            <person name="Armstrong J."/>
            <person name="Belter E.A."/>
            <person name="Caruso L."/>
            <person name="Cedroni M."/>
            <person name="Cotton M."/>
            <person name="Davidson T."/>
            <person name="Desai A."/>
            <person name="Elliott G."/>
            <person name="Erb T."/>
            <person name="Fronick C."/>
            <person name="Gaige T."/>
            <person name="Haakenson W."/>
            <person name="Haglund K."/>
            <person name="Holmes A."/>
            <person name="Harkins R."/>
            <person name="Kim K."/>
            <person name="Kruchowski S.S."/>
            <person name="Strong C.M."/>
            <person name="Grewal N."/>
            <person name="Goyea E."/>
            <person name="Hou S."/>
            <person name="Levy A."/>
            <person name="Martinka S."/>
            <person name="Mead K."/>
            <person name="McLellan M.D."/>
            <person name="Meyer R."/>
            <person name="Randall-Maher J."/>
            <person name="Tomlinson C."/>
            <person name="Dauphin-Kohlberg S."/>
            <person name="Kozlowicz-Reilly A."/>
            <person name="Shah N."/>
            <person name="Swearengen-Shahid S."/>
            <person name="Snider J."/>
            <person name="Strong J.T."/>
            <person name="Thompson J."/>
            <person name="Yoakum M."/>
            <person name="Leonard S."/>
            <person name="Pearman C."/>
            <person name="Trani L."/>
            <person name="Radionenko M."/>
            <person name="Waligorski J.E."/>
            <person name="Wang C."/>
            <person name="Rock S.M."/>
            <person name="Tin-Wollam A.-M."/>
            <person name="Maupin R."/>
            <person name="Latreille P."/>
            <person name="Wendl M.C."/>
            <person name="Yang S.-P."/>
            <person name="Pohl C."/>
            <person name="Wallis J.W."/>
            <person name="Spieth J."/>
            <person name="Bieri T.A."/>
            <person name="Berkowicz N."/>
            <person name="Nelson J.O."/>
            <person name="Osborne J."/>
            <person name="Ding L."/>
            <person name="Meyer R."/>
            <person name="Sabo A."/>
            <person name="Shotland Y."/>
            <person name="Sinha P."/>
            <person name="Wohldmann P.E."/>
            <person name="Cook L.L."/>
            <person name="Hickenbotham M.T."/>
            <person name="Eldred J."/>
            <person name="Williams D."/>
            <person name="Jones T.A."/>
            <person name="She X."/>
            <person name="Ciccarelli F.D."/>
            <person name="Izaurralde E."/>
            <person name="Taylor J."/>
            <person name="Schmutz J."/>
            <person name="Myers R.M."/>
            <person name="Cox D.R."/>
            <person name="Huang X."/>
            <person name="McPherson J.D."/>
            <person name="Mardis E.R."/>
            <person name="Clifton S.W."/>
            <person name="Warren W.C."/>
            <person name="Chinwalla A.T."/>
            <person name="Eddy S.R."/>
            <person name="Marra M.A."/>
            <person name="Ovcharenko I."/>
            <person name="Furey T.S."/>
            <person name="Miller W."/>
            <person name="Eichler E.E."/>
            <person name="Bork P."/>
            <person name="Suyama M."/>
            <person name="Torrents D."/>
            <person name="Waterston R.H."/>
            <person name="Wilson R.K."/>
        </authorList>
    </citation>
    <scope>NUCLEOTIDE SEQUENCE [LARGE SCALE GENOMIC DNA]</scope>
</reference>
<reference key="7">
    <citation type="journal article" date="2004" name="Genome Res.">
        <title>The status, quality, and expansion of the NIH full-length cDNA project: the Mammalian Gene Collection (MGC).</title>
        <authorList>
            <consortium name="The MGC Project Team"/>
        </authorList>
    </citation>
    <scope>NUCLEOTIDE SEQUENCE [LARGE SCALE MRNA] (ISOFORM 1)</scope>
    <source>
        <tissue>Testis</tissue>
        <tissue>Uterus</tissue>
    </source>
</reference>
<reference key="8">
    <citation type="journal article" date="1994" name="Biochem. Biophys. Res. Commun.">
        <title>Cell adhesion activity of a 30-kDa major secreted protein from human bladder carcinoma cells.</title>
        <authorList>
            <person name="Akaogi K."/>
            <person name="Okabe Y."/>
            <person name="Funahashi K."/>
            <person name="Yoshitake Y."/>
            <person name="Nishikawa K."/>
            <person name="Yasumitsu H."/>
            <person name="Umeda M."/>
            <person name="Miyazaki K."/>
        </authorList>
    </citation>
    <scope>PROTEIN SEQUENCE OF 27-46</scope>
    <scope>FUNCTION</scope>
    <source>
        <tissue>Urinary bladder carcinoma</tissue>
    </source>
</reference>
<reference key="9">
    <citation type="journal article" date="2004" name="Protein Sci.">
        <title>Signal peptide prediction based on analysis of experimentally verified cleavage sites.</title>
        <authorList>
            <person name="Zhang Z."/>
            <person name="Henzel W.J."/>
        </authorList>
    </citation>
    <scope>PROTEIN SEQUENCE OF 27-41</scope>
</reference>
<reference key="10">
    <citation type="journal article" date="1996" name="J. Biol. Chem.">
        <title>Synthesis and characterization of insulin-like growth factor-binding protein (IGFBP)-7. Recombinant human mac25 protein specifically binds IGF-I and -II.</title>
        <authorList>
            <person name="Oh Y."/>
            <person name="Nagalla S.R."/>
            <person name="Yamanaka Y."/>
            <person name="Kim H.-S."/>
            <person name="Wilson E."/>
            <person name="Rosenfeld R.G."/>
        </authorList>
    </citation>
    <scope>PROTEIN SEQUENCE OF 27-36</scope>
    <scope>FUNCTION</scope>
    <scope>GLYCOSYLATION</scope>
</reference>
<reference key="11">
    <citation type="journal article" date="2001" name="J. Clin. Endocrinol. Metab.">
        <title>Interaction of IGF-binding protein-related protein 1 with a novel protein, neuroendocrine differentiation factor, results in neuroendocrine differentiation of prostate cancer cells.</title>
        <authorList>
            <person name="Wilson E.M."/>
            <person name="Oh Y."/>
            <person name="Hwa V."/>
            <person name="Rosenfeld R.G."/>
        </authorList>
    </citation>
    <scope>POSSIBLE INTERACTION WITH CHMP3</scope>
</reference>
<reference key="12">
    <citation type="journal article" date="2008" name="RNA">
        <title>Screening of human SNP database identifies recoding sites of A-to-I RNA editing.</title>
        <authorList>
            <person name="Gommans W.M."/>
            <person name="Tatalias N.E."/>
            <person name="Sie C.P."/>
            <person name="Dupuis D."/>
            <person name="Vendetti N."/>
            <person name="Smith L."/>
            <person name="Kaushal R."/>
            <person name="Maas S."/>
        </authorList>
    </citation>
    <scope>RNA EDITING OF POSITIONS 78 AND 95</scope>
</reference>
<reference key="13">
    <citation type="journal article" date="2011" name="Am. J. Hum. Genet.">
        <title>Mutation of IGFBP7 causes upregulation of BRAF/MEK/ERK pathway and familial retinal arterial macroaneurysms.</title>
        <authorList>
            <person name="Abu-Safieh L."/>
            <person name="Abboud E.B."/>
            <person name="Alkuraya H."/>
            <person name="Shamseldin H."/>
            <person name="Al-Enzi S."/>
            <person name="Al-Abdi L."/>
            <person name="Hashem M."/>
            <person name="Colak D."/>
            <person name="Jarallah A."/>
            <person name="Ahmad H."/>
            <person name="Bobis S."/>
            <person name="Nemer G."/>
            <person name="Bitar F."/>
            <person name="Alkuraya F.S."/>
        </authorList>
    </citation>
    <scope>INVOLVEMENT IN RAMSVPS</scope>
</reference>
<reference key="14">
    <citation type="journal article" date="2015" name="Cell">
        <title>A single kinase generates the majority of the secreted phosphoproteome.</title>
        <authorList>
            <person name="Tagliabracci V.S."/>
            <person name="Wiley S.E."/>
            <person name="Guo X."/>
            <person name="Kinch L.N."/>
            <person name="Durrant E."/>
            <person name="Wen J."/>
            <person name="Xiao J."/>
            <person name="Cui J."/>
            <person name="Nguyen K.B."/>
            <person name="Engel J.L."/>
            <person name="Coon J.J."/>
            <person name="Grishin N."/>
            <person name="Pinna L.A."/>
            <person name="Pagliarini D.J."/>
            <person name="Dixon J.E."/>
        </authorList>
    </citation>
    <scope>PHOSPHORYLATION AT SER-239</scope>
</reference>
<reference evidence="16" key="15">
    <citation type="journal article" date="2024" name="Structure">
        <title>Structural insight into CD93 recognition by IGFBP7.</title>
        <authorList>
            <person name="Xu Y."/>
            <person name="Sun Y."/>
            <person name="Zhu Y."/>
            <person name="Song G."/>
        </authorList>
    </citation>
    <scope>X-RAY CRYSTALLOGRAPHY (3.24 ANGSTROMS) OF 30-159</scope>
    <scope>INTERACTION WITH CD93</scope>
    <scope>FUNCTION</scope>
</reference>
<gene>
    <name type="primary">IGFBP7</name>
    <name type="synonym">MAC25</name>
    <name type="synonym">PSF</name>
</gene>
<sequence>MERPSLRALLLGAAGLLLLLLPLSSSSSSDTCGPCEPASCPPLPPLGCLLGETRDACGCCPMCARGEGEPCGGGGAGRGYCAPGMECVKSRKRRKGKAGAAAGGPGVSGVCVCKSRYPVCGSDGTTYPSGCQLRAASQRAESRGEKAITQVSKGTCEQGPSIVTPPKDIWNVTGAQVYLSCEVIGIPTPVLIWNKVKRGHYGVQRTELLPGDRDNLAIQTRGGPEKHEVTGWVLVSPLSKEDAGEYECHASNSQGQASASAKITVVDALHEIPVKKGEGAEL</sequence>
<dbReference type="EMBL" id="L19182">
    <property type="protein sequence ID" value="AAA16187.1"/>
    <property type="molecule type" value="mRNA"/>
</dbReference>
<dbReference type="EMBL" id="S75725">
    <property type="protein sequence ID" value="AAB32370.1"/>
    <property type="molecule type" value="mRNA"/>
</dbReference>
<dbReference type="EMBL" id="AY518539">
    <property type="protein sequence ID" value="AAR89912.1"/>
    <property type="molecule type" value="Genomic_DNA"/>
</dbReference>
<dbReference type="EMBL" id="BT006654">
    <property type="protein sequence ID" value="AAP35300.1"/>
    <property type="molecule type" value="mRNA"/>
</dbReference>
<dbReference type="EMBL" id="AK303915">
    <property type="protein sequence ID" value="BAG64844.1"/>
    <property type="molecule type" value="mRNA"/>
</dbReference>
<dbReference type="EMBL" id="AK316082">
    <property type="protein sequence ID" value="BAH14453.1"/>
    <property type="molecule type" value="mRNA"/>
</dbReference>
<dbReference type="EMBL" id="AC069307">
    <property type="status" value="NOT_ANNOTATED_CDS"/>
    <property type="molecule type" value="Genomic_DNA"/>
</dbReference>
<dbReference type="EMBL" id="AC111197">
    <property type="status" value="NOT_ANNOTATED_CDS"/>
    <property type="molecule type" value="Genomic_DNA"/>
</dbReference>
<dbReference type="EMBL" id="BC017201">
    <property type="protein sequence ID" value="AAH17201.1"/>
    <property type="molecule type" value="mRNA"/>
</dbReference>
<dbReference type="EMBL" id="BC066339">
    <property type="protein sequence ID" value="AAH66339.1"/>
    <property type="molecule type" value="mRNA"/>
</dbReference>
<dbReference type="CCDS" id="CCDS3512.1">
    <molecule id="Q16270-1"/>
</dbReference>
<dbReference type="CCDS" id="CCDS58900.1">
    <molecule id="Q16270-2"/>
</dbReference>
<dbReference type="PIR" id="I52825">
    <property type="entry name" value="I52825"/>
</dbReference>
<dbReference type="PIR" id="PC2030">
    <property type="entry name" value="PC2030"/>
</dbReference>
<dbReference type="PIR" id="S50031">
    <property type="entry name" value="S50031"/>
</dbReference>
<dbReference type="RefSeq" id="NP_001240764.1">
    <molecule id="Q16270-2"/>
    <property type="nucleotide sequence ID" value="NM_001253835.2"/>
</dbReference>
<dbReference type="RefSeq" id="NP_001544.1">
    <molecule id="Q16270-1"/>
    <property type="nucleotide sequence ID" value="NM_001553.3"/>
</dbReference>
<dbReference type="PDB" id="8IVD">
    <property type="method" value="X-ray"/>
    <property type="resolution" value="3.24 A"/>
    <property type="chains" value="A/B/C/D=30-159"/>
</dbReference>
<dbReference type="PDBsum" id="8IVD"/>
<dbReference type="SMR" id="Q16270"/>
<dbReference type="BioGRID" id="109711">
    <property type="interactions" value="21"/>
</dbReference>
<dbReference type="FunCoup" id="Q16270">
    <property type="interactions" value="313"/>
</dbReference>
<dbReference type="IntAct" id="Q16270">
    <property type="interactions" value="11"/>
</dbReference>
<dbReference type="MINT" id="Q16270"/>
<dbReference type="STRING" id="9606.ENSP00000295666"/>
<dbReference type="DrugBank" id="DB00030">
    <property type="generic name" value="Insulin human"/>
</dbReference>
<dbReference type="GlyCosmos" id="Q16270">
    <property type="glycosylation" value="4 sites, 1 glycan"/>
</dbReference>
<dbReference type="GlyGen" id="Q16270">
    <property type="glycosylation" value="10 sites, 3 O-linked glycans (9 sites)"/>
</dbReference>
<dbReference type="iPTMnet" id="Q16270"/>
<dbReference type="PhosphoSitePlus" id="Q16270"/>
<dbReference type="BioMuta" id="IGFBP7"/>
<dbReference type="DMDM" id="23396609"/>
<dbReference type="jPOST" id="Q16270"/>
<dbReference type="MassIVE" id="Q16270"/>
<dbReference type="PaxDb" id="9606-ENSP00000295666"/>
<dbReference type="PeptideAtlas" id="Q16270"/>
<dbReference type="ProteomicsDB" id="5772"/>
<dbReference type="ProteomicsDB" id="60846">
    <molecule id="Q16270-1"/>
</dbReference>
<dbReference type="Pumba" id="Q16270"/>
<dbReference type="Antibodypedia" id="997">
    <property type="antibodies" value="578 antibodies from 41 providers"/>
</dbReference>
<dbReference type="DNASU" id="3490"/>
<dbReference type="Ensembl" id="ENST00000295666.6">
    <molecule id="Q16270-1"/>
    <property type="protein sequence ID" value="ENSP00000295666.4"/>
    <property type="gene ID" value="ENSG00000163453.11"/>
</dbReference>
<dbReference type="Ensembl" id="ENST00000514062.2">
    <molecule id="Q16270-2"/>
    <property type="protein sequence ID" value="ENSP00000486293.1"/>
    <property type="gene ID" value="ENSG00000163453.11"/>
</dbReference>
<dbReference type="GeneID" id="3490"/>
<dbReference type="KEGG" id="hsa:3490"/>
<dbReference type="MANE-Select" id="ENST00000295666.6">
    <property type="protein sequence ID" value="ENSP00000295666.4"/>
    <property type="RefSeq nucleotide sequence ID" value="NM_001553.3"/>
    <property type="RefSeq protein sequence ID" value="NP_001544.1"/>
</dbReference>
<dbReference type="UCSC" id="uc003hcn.4">
    <molecule id="Q16270-1"/>
    <property type="organism name" value="human"/>
</dbReference>
<dbReference type="AGR" id="HGNC:5476"/>
<dbReference type="CTD" id="3490"/>
<dbReference type="DisGeNET" id="3490"/>
<dbReference type="GeneCards" id="IGFBP7"/>
<dbReference type="HGNC" id="HGNC:5476">
    <property type="gene designation" value="IGFBP7"/>
</dbReference>
<dbReference type="HPA" id="ENSG00000163453">
    <property type="expression patterns" value="Low tissue specificity"/>
</dbReference>
<dbReference type="MalaCards" id="IGFBP7"/>
<dbReference type="MIM" id="602867">
    <property type="type" value="gene"/>
</dbReference>
<dbReference type="MIM" id="614224">
    <property type="type" value="phenotype"/>
</dbReference>
<dbReference type="neXtProt" id="NX_Q16270"/>
<dbReference type="OpenTargets" id="ENSG00000163453"/>
<dbReference type="Orphanet" id="284247">
    <property type="disease" value="Familial retinal arterial macroaneurysm"/>
</dbReference>
<dbReference type="PharmGKB" id="PA29709"/>
<dbReference type="VEuPathDB" id="HostDB:ENSG00000163453"/>
<dbReference type="eggNOG" id="ENOG502RACD">
    <property type="taxonomic scope" value="Eukaryota"/>
</dbReference>
<dbReference type="GeneTree" id="ENSGT00530000063555"/>
<dbReference type="InParanoid" id="Q16270"/>
<dbReference type="OMA" id="RDNCGCC"/>
<dbReference type="OrthoDB" id="10012075at2759"/>
<dbReference type="PAN-GO" id="Q16270">
    <property type="GO annotations" value="2 GO annotations based on evolutionary models"/>
</dbReference>
<dbReference type="PhylomeDB" id="Q16270"/>
<dbReference type="TreeFam" id="TF331645"/>
<dbReference type="PathwayCommons" id="Q16270"/>
<dbReference type="Reactome" id="R-HSA-2559582">
    <property type="pathway name" value="Senescence-Associated Secretory Phenotype (SASP)"/>
</dbReference>
<dbReference type="Reactome" id="R-HSA-381426">
    <property type="pathway name" value="Regulation of Insulin-like Growth Factor (IGF) transport and uptake by Insulin-like Growth Factor Binding Proteins (IGFBPs)"/>
</dbReference>
<dbReference type="Reactome" id="R-HSA-8957275">
    <property type="pathway name" value="Post-translational protein phosphorylation"/>
</dbReference>
<dbReference type="SignaLink" id="Q16270"/>
<dbReference type="BioGRID-ORCS" id="3490">
    <property type="hits" value="12 hits in 1160 CRISPR screens"/>
</dbReference>
<dbReference type="ChiTaRS" id="IGFBP7">
    <property type="organism name" value="human"/>
</dbReference>
<dbReference type="GeneWiki" id="IGFBP7"/>
<dbReference type="GenomeRNAi" id="3490"/>
<dbReference type="Pharos" id="Q16270">
    <property type="development level" value="Tbio"/>
</dbReference>
<dbReference type="PRO" id="PR:Q16270"/>
<dbReference type="Proteomes" id="UP000005640">
    <property type="component" value="Chromosome 4"/>
</dbReference>
<dbReference type="RNAct" id="Q16270">
    <property type="molecule type" value="protein"/>
</dbReference>
<dbReference type="Bgee" id="ENSG00000163453">
    <property type="expression patterns" value="Expressed in vena cava and 213 other cell types or tissues"/>
</dbReference>
<dbReference type="GO" id="GO:0062023">
    <property type="term" value="C:collagen-containing extracellular matrix"/>
    <property type="evidence" value="ECO:0007005"/>
    <property type="project" value="BHF-UCL"/>
</dbReference>
<dbReference type="GO" id="GO:0005788">
    <property type="term" value="C:endoplasmic reticulum lumen"/>
    <property type="evidence" value="ECO:0000304"/>
    <property type="project" value="Reactome"/>
</dbReference>
<dbReference type="GO" id="GO:0070062">
    <property type="term" value="C:extracellular exosome"/>
    <property type="evidence" value="ECO:0007005"/>
    <property type="project" value="UniProtKB"/>
</dbReference>
<dbReference type="GO" id="GO:0005576">
    <property type="term" value="C:extracellular region"/>
    <property type="evidence" value="ECO:0007005"/>
    <property type="project" value="BHF-UCL"/>
</dbReference>
<dbReference type="GO" id="GO:0005615">
    <property type="term" value="C:extracellular space"/>
    <property type="evidence" value="ECO:0007005"/>
    <property type="project" value="BHF-UCL"/>
</dbReference>
<dbReference type="GO" id="GO:0005520">
    <property type="term" value="F:insulin-like growth factor binding"/>
    <property type="evidence" value="ECO:0007669"/>
    <property type="project" value="InterPro"/>
</dbReference>
<dbReference type="GO" id="GO:0048018">
    <property type="term" value="F:receptor ligand activity"/>
    <property type="evidence" value="ECO:0000314"/>
    <property type="project" value="UniProt"/>
</dbReference>
<dbReference type="GO" id="GO:0001525">
    <property type="term" value="P:angiogenesis"/>
    <property type="evidence" value="ECO:0000314"/>
    <property type="project" value="UniProt"/>
</dbReference>
<dbReference type="GO" id="GO:0007155">
    <property type="term" value="P:cell adhesion"/>
    <property type="evidence" value="ECO:0000314"/>
    <property type="project" value="UniProtKB"/>
</dbReference>
<dbReference type="GO" id="GO:0032870">
    <property type="term" value="P:cellular response to hormone stimulus"/>
    <property type="evidence" value="ECO:0007669"/>
    <property type="project" value="Ensembl"/>
</dbReference>
<dbReference type="GO" id="GO:0007566">
    <property type="term" value="P:embryo implantation"/>
    <property type="evidence" value="ECO:0007669"/>
    <property type="project" value="Ensembl"/>
</dbReference>
<dbReference type="GO" id="GO:0008285">
    <property type="term" value="P:negative regulation of cell population proliferation"/>
    <property type="evidence" value="ECO:0000304"/>
    <property type="project" value="ProtInc"/>
</dbReference>
<dbReference type="GO" id="GO:0001558">
    <property type="term" value="P:regulation of cell growth"/>
    <property type="evidence" value="ECO:0007669"/>
    <property type="project" value="InterPro"/>
</dbReference>
<dbReference type="GO" id="GO:0009966">
    <property type="term" value="P:regulation of signal transduction"/>
    <property type="evidence" value="ECO:0000318"/>
    <property type="project" value="GO_Central"/>
</dbReference>
<dbReference type="GO" id="GO:0050810">
    <property type="term" value="P:regulation of steroid biosynthetic process"/>
    <property type="evidence" value="ECO:0007669"/>
    <property type="project" value="Ensembl"/>
</dbReference>
<dbReference type="GO" id="GO:0051414">
    <property type="term" value="P:response to cortisol"/>
    <property type="evidence" value="ECO:0007669"/>
    <property type="project" value="Ensembl"/>
</dbReference>
<dbReference type="GO" id="GO:0032526">
    <property type="term" value="P:response to retinoic acid"/>
    <property type="evidence" value="ECO:0007669"/>
    <property type="project" value="Ensembl"/>
</dbReference>
<dbReference type="CDD" id="cd00104">
    <property type="entry name" value="KAZAL_FS"/>
    <property type="match status" value="1"/>
</dbReference>
<dbReference type="FunFam" id="2.60.40.10:FF:000763">
    <property type="entry name" value="Insulin-like growth factor binding protein 7"/>
    <property type="match status" value="1"/>
</dbReference>
<dbReference type="FunFam" id="3.30.60.30:FF:000026">
    <property type="entry name" value="Insulin-like growth factor-binding protein 7"/>
    <property type="match status" value="1"/>
</dbReference>
<dbReference type="FunFam" id="4.10.40.20:FF:000006">
    <property type="entry name" value="insulin-like growth factor-binding protein 7"/>
    <property type="match status" value="1"/>
</dbReference>
<dbReference type="Gene3D" id="3.30.60.30">
    <property type="match status" value="1"/>
</dbReference>
<dbReference type="Gene3D" id="4.10.40.20">
    <property type="match status" value="1"/>
</dbReference>
<dbReference type="Gene3D" id="2.60.40.10">
    <property type="entry name" value="Immunoglobulins"/>
    <property type="match status" value="1"/>
</dbReference>
<dbReference type="InterPro" id="IPR009030">
    <property type="entry name" value="Growth_fac_rcpt_cys_sf"/>
</dbReference>
<dbReference type="InterPro" id="IPR007110">
    <property type="entry name" value="Ig-like_dom"/>
</dbReference>
<dbReference type="InterPro" id="IPR036179">
    <property type="entry name" value="Ig-like_dom_sf"/>
</dbReference>
<dbReference type="InterPro" id="IPR013783">
    <property type="entry name" value="Ig-like_fold"/>
</dbReference>
<dbReference type="InterPro" id="IPR013098">
    <property type="entry name" value="Ig_I-set"/>
</dbReference>
<dbReference type="InterPro" id="IPR003599">
    <property type="entry name" value="Ig_sub"/>
</dbReference>
<dbReference type="InterPro" id="IPR000867">
    <property type="entry name" value="IGFBP-like"/>
</dbReference>
<dbReference type="InterPro" id="IPR011390">
    <property type="entry name" value="IGFBP_rP_mac25"/>
</dbReference>
<dbReference type="InterPro" id="IPR002350">
    <property type="entry name" value="Kazal_dom"/>
</dbReference>
<dbReference type="InterPro" id="IPR036058">
    <property type="entry name" value="Kazal_dom_sf"/>
</dbReference>
<dbReference type="PANTHER" id="PTHR14186">
    <property type="entry name" value="INSULIN-LIKE GROWTH FACTOR BINDING PROTEIN-RELATED"/>
    <property type="match status" value="1"/>
</dbReference>
<dbReference type="PANTHER" id="PTHR14186:SF19">
    <property type="entry name" value="INSULIN-LIKE GROWTH FACTOR-BINDING PROTEIN 7"/>
    <property type="match status" value="1"/>
</dbReference>
<dbReference type="Pfam" id="PF07679">
    <property type="entry name" value="I-set"/>
    <property type="match status" value="1"/>
</dbReference>
<dbReference type="Pfam" id="PF00219">
    <property type="entry name" value="IGFBP"/>
    <property type="match status" value="1"/>
</dbReference>
<dbReference type="Pfam" id="PF07648">
    <property type="entry name" value="Kazal_2"/>
    <property type="match status" value="1"/>
</dbReference>
<dbReference type="PIRSF" id="PIRSF018239">
    <property type="entry name" value="IGFBP_rP_mac25"/>
    <property type="match status" value="1"/>
</dbReference>
<dbReference type="SMART" id="SM00121">
    <property type="entry name" value="IB"/>
    <property type="match status" value="1"/>
</dbReference>
<dbReference type="SMART" id="SM00409">
    <property type="entry name" value="IG"/>
    <property type="match status" value="1"/>
</dbReference>
<dbReference type="SMART" id="SM00280">
    <property type="entry name" value="KAZAL"/>
    <property type="match status" value="1"/>
</dbReference>
<dbReference type="SUPFAM" id="SSF57184">
    <property type="entry name" value="Growth factor receptor domain"/>
    <property type="match status" value="1"/>
</dbReference>
<dbReference type="SUPFAM" id="SSF48726">
    <property type="entry name" value="Immunoglobulin"/>
    <property type="match status" value="1"/>
</dbReference>
<dbReference type="SUPFAM" id="SSF100895">
    <property type="entry name" value="Kazal-type serine protease inhibitors"/>
    <property type="match status" value="1"/>
</dbReference>
<dbReference type="PROSITE" id="PS50835">
    <property type="entry name" value="IG_LIKE"/>
    <property type="match status" value="1"/>
</dbReference>
<dbReference type="PROSITE" id="PS51323">
    <property type="entry name" value="IGFBP_N_2"/>
    <property type="match status" value="1"/>
</dbReference>
<dbReference type="PROSITE" id="PS51465">
    <property type="entry name" value="KAZAL_2"/>
    <property type="match status" value="1"/>
</dbReference>
<organism>
    <name type="scientific">Homo sapiens</name>
    <name type="common">Human</name>
    <dbReference type="NCBI Taxonomy" id="9606"/>
    <lineage>
        <taxon>Eukaryota</taxon>
        <taxon>Metazoa</taxon>
        <taxon>Chordata</taxon>
        <taxon>Craniata</taxon>
        <taxon>Vertebrata</taxon>
        <taxon>Euteleostomi</taxon>
        <taxon>Mammalia</taxon>
        <taxon>Eutheria</taxon>
        <taxon>Euarchontoglires</taxon>
        <taxon>Primates</taxon>
        <taxon>Haplorrhini</taxon>
        <taxon>Catarrhini</taxon>
        <taxon>Hominidae</taxon>
        <taxon>Homo</taxon>
    </lineage>
</organism>
<name>IBP7_HUMAN</name>
<protein>
    <recommendedName>
        <fullName>Insulin-like growth factor-binding protein 7</fullName>
        <shortName>IBP-7</shortName>
        <shortName>IGF-binding protein 7</shortName>
        <shortName>IGFBP-7</shortName>
    </recommendedName>
    <alternativeName>
        <fullName>IGFBP-rP1</fullName>
    </alternativeName>
    <alternativeName>
        <fullName>MAC25 protein</fullName>
    </alternativeName>
    <alternativeName>
        <fullName>PGI2-stimulating factor</fullName>
    </alternativeName>
    <alternativeName>
        <fullName>Prostacyclin-stimulating factor</fullName>
    </alternativeName>
    <alternativeName>
        <fullName>Tumor-derived adhesion factor</fullName>
        <shortName>TAF</shortName>
    </alternativeName>
</protein>
<feature type="signal peptide" evidence="4 10 11">
    <location>
        <begin position="1"/>
        <end position="26"/>
    </location>
</feature>
<feature type="chain" id="PRO_0000014392" description="Insulin-like growth factor-binding protein 7">
    <location>
        <begin position="27"/>
        <end position="282"/>
    </location>
</feature>
<feature type="domain" description="IGFBP N-terminal" evidence="2">
    <location>
        <begin position="28"/>
        <end position="114"/>
    </location>
</feature>
<feature type="domain" description="Kazal-like" evidence="3">
    <location>
        <begin position="105"/>
        <end position="158"/>
    </location>
</feature>
<feature type="domain" description="Ig-like C2-type">
    <location>
        <begin position="160"/>
        <end position="264"/>
    </location>
</feature>
<feature type="modified residue" description="Phosphoserine; by FAM20C" evidence="7">
    <location>
        <position position="239"/>
    </location>
</feature>
<feature type="glycosylation site" description="N-linked (GlcNAc...) asparagine" evidence="15">
    <location>
        <position position="171"/>
    </location>
</feature>
<feature type="disulfide bond" evidence="2">
    <location>
        <begin position="32"/>
        <end position="57"/>
    </location>
</feature>
<feature type="disulfide bond" evidence="2">
    <location>
        <begin position="35"/>
        <end position="59"/>
    </location>
</feature>
<feature type="disulfide bond" evidence="2">
    <location>
        <begin position="40"/>
        <end position="60"/>
    </location>
</feature>
<feature type="disulfide bond" evidence="2">
    <location>
        <begin position="48"/>
        <end position="63"/>
    </location>
</feature>
<feature type="disulfide bond" evidence="2">
    <location>
        <begin position="71"/>
        <end position="87"/>
    </location>
</feature>
<feature type="disulfide bond" evidence="2">
    <location>
        <begin position="81"/>
        <end position="111"/>
    </location>
</feature>
<feature type="disulfide bond" evidence="3">
    <location>
        <begin position="120"/>
        <end position="156"/>
    </location>
</feature>
<feature type="disulfide bond" evidence="1">
    <location>
        <begin position="181"/>
        <end position="248"/>
    </location>
</feature>
<feature type="splice variant" id="VSP_045297" description="In isoform 2." evidence="13">
    <original>EGAEL</original>
    <variation>TQ</variation>
    <location>
        <begin position="278"/>
        <end position="282"/>
    </location>
</feature>
<feature type="sequence variant" id="VAR_018959" description="In dbSNP:rs11573021." evidence="9 12">
    <original>L</original>
    <variation>F</variation>
    <location>
        <position position="11"/>
    </location>
</feature>
<feature type="sequence variant" id="VAR_063638" description="In RNA edited version; dbSNP:rs11555284.">
    <original>R</original>
    <variation>G</variation>
    <location>
        <position position="78"/>
    </location>
</feature>
<feature type="sequence variant" id="VAR_063639" description="In RNA edited version; dbSNP:rs1133243.">
    <original>K</original>
    <variation>R</variation>
    <location>
        <position position="95"/>
    </location>
</feature>
<feature type="sequence conflict" description="In Ref. 1; AAA16187." evidence="14" ref="1">
    <original>P</original>
    <variation>A</variation>
    <location>
        <position position="4"/>
    </location>
</feature>
<feature type="sequence conflict" description="In Ref. 1; AAA16187." evidence="14" ref="1">
    <original>A</original>
    <variation>P</variation>
    <location>
        <position position="13"/>
    </location>
</feature>
<feature type="sequence conflict" description="In Ref. 5; BAH14453." evidence="14" ref="5">
    <original>E</original>
    <variation>G</variation>
    <location>
        <position position="69"/>
    </location>
</feature>
<feature type="sequence conflict" description="In Ref. 1; AAA16187." evidence="14" ref="1">
    <original>PVKKGEGAEL</original>
    <variation>ASEKR</variation>
    <location>
        <begin position="273"/>
        <end position="282"/>
    </location>
</feature>
<feature type="strand" evidence="17">
    <location>
        <begin position="37"/>
        <end position="39"/>
    </location>
</feature>
<feature type="strand" evidence="17">
    <location>
        <begin position="52"/>
        <end position="54"/>
    </location>
</feature>
<feature type="strand" evidence="17">
    <location>
        <begin position="60"/>
        <end position="63"/>
    </location>
</feature>
<feature type="strand" evidence="17">
    <location>
        <begin position="69"/>
        <end position="71"/>
    </location>
</feature>
<feature type="strand" evidence="17">
    <location>
        <begin position="73"/>
        <end position="75"/>
    </location>
</feature>
<feature type="strand" evidence="17">
    <location>
        <begin position="85"/>
        <end position="88"/>
    </location>
</feature>
<feature type="strand" evidence="17">
    <location>
        <begin position="109"/>
        <end position="114"/>
    </location>
</feature>
<feature type="strand" evidence="17">
    <location>
        <begin position="119"/>
        <end position="121"/>
    </location>
</feature>
<feature type="strand" evidence="17">
    <location>
        <begin position="126"/>
        <end position="129"/>
    </location>
</feature>
<feature type="helix" evidence="17">
    <location>
        <begin position="130"/>
        <end position="143"/>
    </location>
</feature>
<feature type="strand" evidence="17">
    <location>
        <begin position="150"/>
        <end position="154"/>
    </location>
</feature>
<accession>Q16270</accession>
<accession>B4E1N2</accession>
<accession>B7Z9W7</accession>
<accession>Q07822</accession>
<accession>Q53YE6</accession>
<accession>Q9UCA8</accession>